<gene>
    <name evidence="1" type="primary">ureB</name>
    <name type="ordered locus">SAHV_2273</name>
</gene>
<proteinExistence type="inferred from homology"/>
<accession>A7X5M0</accession>
<protein>
    <recommendedName>
        <fullName evidence="1">Urease subunit beta</fullName>
        <ecNumber evidence="1">3.5.1.5</ecNumber>
    </recommendedName>
    <alternativeName>
        <fullName evidence="1">Urea amidohydrolase subunit beta</fullName>
    </alternativeName>
</protein>
<reference key="1">
    <citation type="journal article" date="2008" name="Antimicrob. Agents Chemother.">
        <title>Mutated response regulator graR is responsible for phenotypic conversion of Staphylococcus aureus from heterogeneous vancomycin-intermediate resistance to vancomycin-intermediate resistance.</title>
        <authorList>
            <person name="Neoh H.-M."/>
            <person name="Cui L."/>
            <person name="Yuzawa H."/>
            <person name="Takeuchi F."/>
            <person name="Matsuo M."/>
            <person name="Hiramatsu K."/>
        </authorList>
    </citation>
    <scope>NUCLEOTIDE SEQUENCE [LARGE SCALE GENOMIC DNA]</scope>
    <source>
        <strain>Mu3 / ATCC 700698</strain>
    </source>
</reference>
<keyword id="KW-0963">Cytoplasm</keyword>
<keyword id="KW-0378">Hydrolase</keyword>
<name>URE2_STAA1</name>
<evidence type="ECO:0000255" key="1">
    <source>
        <dbReference type="HAMAP-Rule" id="MF_01954"/>
    </source>
</evidence>
<organism>
    <name type="scientific">Staphylococcus aureus (strain Mu3 / ATCC 700698)</name>
    <dbReference type="NCBI Taxonomy" id="418127"/>
    <lineage>
        <taxon>Bacteria</taxon>
        <taxon>Bacillati</taxon>
        <taxon>Bacillota</taxon>
        <taxon>Bacilli</taxon>
        <taxon>Bacillales</taxon>
        <taxon>Staphylococcaceae</taxon>
        <taxon>Staphylococcus</taxon>
    </lineage>
</organism>
<feature type="chain" id="PRO_1000070776" description="Urease subunit beta">
    <location>
        <begin position="1"/>
        <end position="136"/>
    </location>
</feature>
<sequence length="136" mass="15107">MIPGEIITKSTEVEINNHHPETVIEVENTGDRPIQVGSHFHFYEANAALDFEREMAYGKHLDIPAGAAVRFEPGDKKEVQLVEYAGKRKIFGFRGMVNGPIDESRVYRPTDENDAYAGVFGDNGAENVNKKGGKRS</sequence>
<comment type="catalytic activity">
    <reaction evidence="1">
        <text>urea + 2 H2O + H(+) = hydrogencarbonate + 2 NH4(+)</text>
        <dbReference type="Rhea" id="RHEA:20557"/>
        <dbReference type="ChEBI" id="CHEBI:15377"/>
        <dbReference type="ChEBI" id="CHEBI:15378"/>
        <dbReference type="ChEBI" id="CHEBI:16199"/>
        <dbReference type="ChEBI" id="CHEBI:17544"/>
        <dbReference type="ChEBI" id="CHEBI:28938"/>
        <dbReference type="EC" id="3.5.1.5"/>
    </reaction>
</comment>
<comment type="pathway">
    <text evidence="1">Nitrogen metabolism; urea degradation; CO(2) and NH(3) from urea (urease route): step 1/1.</text>
</comment>
<comment type="subunit">
    <text evidence="1">Heterotrimer of UreA (gamma), UreB (beta) and UreC (alpha) subunits. Three heterotrimers associate to form the active enzyme.</text>
</comment>
<comment type="subcellular location">
    <subcellularLocation>
        <location evidence="1">Cytoplasm</location>
    </subcellularLocation>
</comment>
<comment type="similarity">
    <text evidence="1">Belongs to the urease beta subunit family.</text>
</comment>
<dbReference type="EC" id="3.5.1.5" evidence="1"/>
<dbReference type="EMBL" id="AP009324">
    <property type="protein sequence ID" value="BAF79156.1"/>
    <property type="molecule type" value="Genomic_DNA"/>
</dbReference>
<dbReference type="RefSeq" id="WP_000612126.1">
    <property type="nucleotide sequence ID" value="NC_009782.1"/>
</dbReference>
<dbReference type="SMR" id="A7X5M0"/>
<dbReference type="KEGG" id="saw:SAHV_2273"/>
<dbReference type="HOGENOM" id="CLU_129707_2_2_9"/>
<dbReference type="UniPathway" id="UPA00258">
    <property type="reaction ID" value="UER00370"/>
</dbReference>
<dbReference type="GO" id="GO:0035550">
    <property type="term" value="C:urease complex"/>
    <property type="evidence" value="ECO:0007669"/>
    <property type="project" value="InterPro"/>
</dbReference>
<dbReference type="GO" id="GO:0009039">
    <property type="term" value="F:urease activity"/>
    <property type="evidence" value="ECO:0007669"/>
    <property type="project" value="UniProtKB-UniRule"/>
</dbReference>
<dbReference type="GO" id="GO:0043419">
    <property type="term" value="P:urea catabolic process"/>
    <property type="evidence" value="ECO:0007669"/>
    <property type="project" value="UniProtKB-UniRule"/>
</dbReference>
<dbReference type="CDD" id="cd00407">
    <property type="entry name" value="Urease_beta"/>
    <property type="match status" value="1"/>
</dbReference>
<dbReference type="FunFam" id="2.10.150.10:FF:000001">
    <property type="entry name" value="Urease subunit beta"/>
    <property type="match status" value="1"/>
</dbReference>
<dbReference type="Gene3D" id="2.10.150.10">
    <property type="entry name" value="Urease, beta subunit"/>
    <property type="match status" value="1"/>
</dbReference>
<dbReference type="HAMAP" id="MF_01954">
    <property type="entry name" value="Urease_beta"/>
    <property type="match status" value="1"/>
</dbReference>
<dbReference type="InterPro" id="IPR002019">
    <property type="entry name" value="Urease_beta-like"/>
</dbReference>
<dbReference type="InterPro" id="IPR036461">
    <property type="entry name" value="Urease_betasu_sf"/>
</dbReference>
<dbReference type="InterPro" id="IPR050069">
    <property type="entry name" value="Urease_subunit"/>
</dbReference>
<dbReference type="NCBIfam" id="NF009682">
    <property type="entry name" value="PRK13203.1"/>
    <property type="match status" value="1"/>
</dbReference>
<dbReference type="NCBIfam" id="TIGR00192">
    <property type="entry name" value="urease_beta"/>
    <property type="match status" value="1"/>
</dbReference>
<dbReference type="PANTHER" id="PTHR33569">
    <property type="entry name" value="UREASE"/>
    <property type="match status" value="1"/>
</dbReference>
<dbReference type="PANTHER" id="PTHR33569:SF1">
    <property type="entry name" value="UREASE"/>
    <property type="match status" value="1"/>
</dbReference>
<dbReference type="Pfam" id="PF00699">
    <property type="entry name" value="Urease_beta"/>
    <property type="match status" value="1"/>
</dbReference>
<dbReference type="SUPFAM" id="SSF51278">
    <property type="entry name" value="Urease, beta-subunit"/>
    <property type="match status" value="1"/>
</dbReference>